<feature type="chain" id="PRO_0000249967" description="Anhydro-N-acetylmuramic acid kinase">
    <location>
        <begin position="1"/>
        <end position="373"/>
    </location>
</feature>
<feature type="binding site" evidence="1">
    <location>
        <begin position="13"/>
        <end position="20"/>
    </location>
    <ligand>
        <name>ATP</name>
        <dbReference type="ChEBI" id="CHEBI:30616"/>
    </ligand>
</feature>
<evidence type="ECO:0000255" key="1">
    <source>
        <dbReference type="HAMAP-Rule" id="MF_01270"/>
    </source>
</evidence>
<evidence type="ECO:0000305" key="2"/>
<proteinExistence type="inferred from homology"/>
<gene>
    <name evidence="1" type="primary">anmK</name>
    <name type="ordered locus">Atu1827</name>
    <name type="ORF">AGR_C_3353</name>
</gene>
<comment type="function">
    <text evidence="1">Catalyzes the specific phosphorylation of 1,6-anhydro-N-acetylmuramic acid (anhMurNAc) with the simultaneous cleavage of the 1,6-anhydro ring, generating MurNAc-6-P. Is required for the utilization of anhMurNAc either imported from the medium or derived from its own cell wall murein, and thus plays a role in cell wall recycling.</text>
</comment>
<comment type="catalytic activity">
    <reaction evidence="1">
        <text>1,6-anhydro-N-acetyl-beta-muramate + ATP + H2O = N-acetyl-D-muramate 6-phosphate + ADP + H(+)</text>
        <dbReference type="Rhea" id="RHEA:24952"/>
        <dbReference type="ChEBI" id="CHEBI:15377"/>
        <dbReference type="ChEBI" id="CHEBI:15378"/>
        <dbReference type="ChEBI" id="CHEBI:30616"/>
        <dbReference type="ChEBI" id="CHEBI:58690"/>
        <dbReference type="ChEBI" id="CHEBI:58722"/>
        <dbReference type="ChEBI" id="CHEBI:456216"/>
        <dbReference type="EC" id="2.7.1.170"/>
    </reaction>
</comment>
<comment type="pathway">
    <text evidence="1">Amino-sugar metabolism; 1,6-anhydro-N-acetylmuramate degradation.</text>
</comment>
<comment type="pathway">
    <text evidence="1">Cell wall biogenesis; peptidoglycan recycling.</text>
</comment>
<comment type="similarity">
    <text evidence="1">Belongs to the anhydro-N-acetylmuramic acid kinase family.</text>
</comment>
<comment type="sequence caution" evidence="2">
    <conflict type="erroneous initiation">
        <sequence resource="EMBL-CDS" id="AAK87596"/>
    </conflict>
</comment>
<reference key="1">
    <citation type="journal article" date="2001" name="Science">
        <title>The genome of the natural genetic engineer Agrobacterium tumefaciens C58.</title>
        <authorList>
            <person name="Wood D.W."/>
            <person name="Setubal J.C."/>
            <person name="Kaul R."/>
            <person name="Monks D.E."/>
            <person name="Kitajima J.P."/>
            <person name="Okura V.K."/>
            <person name="Zhou Y."/>
            <person name="Chen L."/>
            <person name="Wood G.E."/>
            <person name="Almeida N.F. Jr."/>
            <person name="Woo L."/>
            <person name="Chen Y."/>
            <person name="Paulsen I.T."/>
            <person name="Eisen J.A."/>
            <person name="Karp P.D."/>
            <person name="Bovee D. Sr."/>
            <person name="Chapman P."/>
            <person name="Clendenning J."/>
            <person name="Deatherage G."/>
            <person name="Gillet W."/>
            <person name="Grant C."/>
            <person name="Kutyavin T."/>
            <person name="Levy R."/>
            <person name="Li M.-J."/>
            <person name="McClelland E."/>
            <person name="Palmieri A."/>
            <person name="Raymond C."/>
            <person name="Rouse G."/>
            <person name="Saenphimmachak C."/>
            <person name="Wu Z."/>
            <person name="Romero P."/>
            <person name="Gordon D."/>
            <person name="Zhang S."/>
            <person name="Yoo H."/>
            <person name="Tao Y."/>
            <person name="Biddle P."/>
            <person name="Jung M."/>
            <person name="Krespan W."/>
            <person name="Perry M."/>
            <person name="Gordon-Kamm B."/>
            <person name="Liao L."/>
            <person name="Kim S."/>
            <person name="Hendrick C."/>
            <person name="Zhao Z.-Y."/>
            <person name="Dolan M."/>
            <person name="Chumley F."/>
            <person name="Tingey S.V."/>
            <person name="Tomb J.-F."/>
            <person name="Gordon M.P."/>
            <person name="Olson M.V."/>
            <person name="Nester E.W."/>
        </authorList>
    </citation>
    <scope>NUCLEOTIDE SEQUENCE [LARGE SCALE GENOMIC DNA]</scope>
    <source>
        <strain>C58 / ATCC 33970</strain>
    </source>
</reference>
<reference key="2">
    <citation type="journal article" date="2001" name="Science">
        <title>Genome sequence of the plant pathogen and biotechnology agent Agrobacterium tumefaciens C58.</title>
        <authorList>
            <person name="Goodner B."/>
            <person name="Hinkle G."/>
            <person name="Gattung S."/>
            <person name="Miller N."/>
            <person name="Blanchard M."/>
            <person name="Qurollo B."/>
            <person name="Goldman B.S."/>
            <person name="Cao Y."/>
            <person name="Askenazi M."/>
            <person name="Halling C."/>
            <person name="Mullin L."/>
            <person name="Houmiel K."/>
            <person name="Gordon J."/>
            <person name="Vaudin M."/>
            <person name="Iartchouk O."/>
            <person name="Epp A."/>
            <person name="Liu F."/>
            <person name="Wollam C."/>
            <person name="Allinger M."/>
            <person name="Doughty D."/>
            <person name="Scott C."/>
            <person name="Lappas C."/>
            <person name="Markelz B."/>
            <person name="Flanagan C."/>
            <person name="Crowell C."/>
            <person name="Gurson J."/>
            <person name="Lomo C."/>
            <person name="Sear C."/>
            <person name="Strub G."/>
            <person name="Cielo C."/>
            <person name="Slater S."/>
        </authorList>
    </citation>
    <scope>NUCLEOTIDE SEQUENCE [LARGE SCALE GENOMIC DNA]</scope>
    <source>
        <strain>C58 / ATCC 33970</strain>
    </source>
</reference>
<sequence length="373" mass="39293">MGEVKTAIGLMSGTSMDGIDIAVLRTDGESVVRHGPSGYFPYDPGLRGIWQKALTTAKAIRERRERPGDLGEAERKLTLAHAAAVKSFLHRHRFDVGDIDVIGFHGQTVLHRPDEALTVQIGDGALLAEETGIDVVYDMRANDMVHGGQGAPLIPAYHMALSANLPDGFETPAVFVNIGGISNLTYIGEGGRLAAFDSGPGNMLIDQWIEAHTGKAFDKGGRTAAGGSVVASLVARYMESPFFSANIRRSLDRSDFVPPQKGEVSLADGARTLSHLTGAAILKSASYLPEAAKTYVVCGGGRLNPVIMEELAGLAAKQGARVIAAEEAGFDGGAMEAEAWAYLAVRSLRGLPLTYPGTTGVKEPVTGGVLVRA</sequence>
<keyword id="KW-0067">ATP-binding</keyword>
<keyword id="KW-0119">Carbohydrate metabolism</keyword>
<keyword id="KW-0418">Kinase</keyword>
<keyword id="KW-0547">Nucleotide-binding</keyword>
<keyword id="KW-1185">Reference proteome</keyword>
<keyword id="KW-0808">Transferase</keyword>
<dbReference type="EC" id="2.7.1.170" evidence="1"/>
<dbReference type="EMBL" id="AE007869">
    <property type="protein sequence ID" value="AAK87596.2"/>
    <property type="status" value="ALT_INIT"/>
    <property type="molecule type" value="Genomic_DNA"/>
</dbReference>
<dbReference type="PIR" id="AI2800">
    <property type="entry name" value="AI2800"/>
</dbReference>
<dbReference type="PIR" id="C97580">
    <property type="entry name" value="C97580"/>
</dbReference>
<dbReference type="RefSeq" id="NP_354811.2">
    <property type="nucleotide sequence ID" value="NC_003062.2"/>
</dbReference>
<dbReference type="RefSeq" id="WP_035258373.1">
    <property type="nucleotide sequence ID" value="NC_003062.2"/>
</dbReference>
<dbReference type="SMR" id="Q8UED3"/>
<dbReference type="STRING" id="176299.Atu1827"/>
<dbReference type="EnsemblBacteria" id="AAK87596">
    <property type="protein sequence ID" value="AAK87596"/>
    <property type="gene ID" value="Atu1827"/>
</dbReference>
<dbReference type="GeneID" id="1133865"/>
<dbReference type="KEGG" id="atu:Atu1827"/>
<dbReference type="PATRIC" id="fig|176299.10.peg.1841"/>
<dbReference type="eggNOG" id="COG2377">
    <property type="taxonomic scope" value="Bacteria"/>
</dbReference>
<dbReference type="HOGENOM" id="CLU_038782_3_0_5"/>
<dbReference type="OrthoDB" id="9763949at2"/>
<dbReference type="BioCyc" id="AGRO:ATU1827-MONOMER"/>
<dbReference type="UniPathway" id="UPA00343"/>
<dbReference type="UniPathway" id="UPA00544"/>
<dbReference type="Proteomes" id="UP000000813">
    <property type="component" value="Chromosome circular"/>
</dbReference>
<dbReference type="GO" id="GO:0005524">
    <property type="term" value="F:ATP binding"/>
    <property type="evidence" value="ECO:0007669"/>
    <property type="project" value="UniProtKB-UniRule"/>
</dbReference>
<dbReference type="GO" id="GO:0016301">
    <property type="term" value="F:kinase activity"/>
    <property type="evidence" value="ECO:0007669"/>
    <property type="project" value="UniProtKB-KW"/>
</dbReference>
<dbReference type="GO" id="GO:0016773">
    <property type="term" value="F:phosphotransferase activity, alcohol group as acceptor"/>
    <property type="evidence" value="ECO:0007669"/>
    <property type="project" value="UniProtKB-UniRule"/>
</dbReference>
<dbReference type="GO" id="GO:0097175">
    <property type="term" value="P:1,6-anhydro-N-acetyl-beta-muramic acid catabolic process"/>
    <property type="evidence" value="ECO:0007669"/>
    <property type="project" value="UniProtKB-UniRule"/>
</dbReference>
<dbReference type="GO" id="GO:0006040">
    <property type="term" value="P:amino sugar metabolic process"/>
    <property type="evidence" value="ECO:0007669"/>
    <property type="project" value="InterPro"/>
</dbReference>
<dbReference type="GO" id="GO:0009254">
    <property type="term" value="P:peptidoglycan turnover"/>
    <property type="evidence" value="ECO:0007669"/>
    <property type="project" value="UniProtKB-UniRule"/>
</dbReference>
<dbReference type="Gene3D" id="3.30.420.40">
    <property type="match status" value="2"/>
</dbReference>
<dbReference type="HAMAP" id="MF_01270">
    <property type="entry name" value="AnhMurNAc_kinase"/>
    <property type="match status" value="1"/>
</dbReference>
<dbReference type="InterPro" id="IPR005338">
    <property type="entry name" value="Anhydro_N_Ac-Mur_kinase"/>
</dbReference>
<dbReference type="InterPro" id="IPR043129">
    <property type="entry name" value="ATPase_NBD"/>
</dbReference>
<dbReference type="NCBIfam" id="NF007141">
    <property type="entry name" value="PRK09585.1-5"/>
    <property type="match status" value="1"/>
</dbReference>
<dbReference type="PANTHER" id="PTHR30605">
    <property type="entry name" value="ANHYDRO-N-ACETYLMURAMIC ACID KINASE"/>
    <property type="match status" value="1"/>
</dbReference>
<dbReference type="PANTHER" id="PTHR30605:SF0">
    <property type="entry name" value="ANHYDRO-N-ACETYLMURAMIC ACID KINASE"/>
    <property type="match status" value="1"/>
</dbReference>
<dbReference type="Pfam" id="PF03702">
    <property type="entry name" value="AnmK"/>
    <property type="match status" value="1"/>
</dbReference>
<dbReference type="SUPFAM" id="SSF53067">
    <property type="entry name" value="Actin-like ATPase domain"/>
    <property type="match status" value="1"/>
</dbReference>
<organism>
    <name type="scientific">Agrobacterium fabrum (strain C58 / ATCC 33970)</name>
    <name type="common">Agrobacterium tumefaciens (strain C58)</name>
    <dbReference type="NCBI Taxonomy" id="176299"/>
    <lineage>
        <taxon>Bacteria</taxon>
        <taxon>Pseudomonadati</taxon>
        <taxon>Pseudomonadota</taxon>
        <taxon>Alphaproteobacteria</taxon>
        <taxon>Hyphomicrobiales</taxon>
        <taxon>Rhizobiaceae</taxon>
        <taxon>Rhizobium/Agrobacterium group</taxon>
        <taxon>Agrobacterium</taxon>
        <taxon>Agrobacterium tumefaciens complex</taxon>
    </lineage>
</organism>
<name>ANMK_AGRFC</name>
<protein>
    <recommendedName>
        <fullName evidence="1">Anhydro-N-acetylmuramic acid kinase</fullName>
        <ecNumber evidence="1">2.7.1.170</ecNumber>
    </recommendedName>
    <alternativeName>
        <fullName evidence="1">AnhMurNAc kinase</fullName>
    </alternativeName>
</protein>
<accession>Q8UED3</accession>
<accession>Q7CYF8</accession>